<dbReference type="EC" id="6.1.1.9" evidence="1"/>
<dbReference type="EMBL" id="CP000879">
    <property type="protein sequence ID" value="ABX32160.1"/>
    <property type="molecule type" value="Genomic_DNA"/>
</dbReference>
<dbReference type="RefSeq" id="WP_012209259.1">
    <property type="nucleotide sequence ID" value="NC_010003.1"/>
</dbReference>
<dbReference type="SMR" id="A9BIJ7"/>
<dbReference type="STRING" id="403833.Pmob_1457"/>
<dbReference type="KEGG" id="pmo:Pmob_1457"/>
<dbReference type="eggNOG" id="COG0525">
    <property type="taxonomic scope" value="Bacteria"/>
</dbReference>
<dbReference type="HOGENOM" id="CLU_001493_0_2_0"/>
<dbReference type="OrthoDB" id="9810365at2"/>
<dbReference type="Proteomes" id="UP000000789">
    <property type="component" value="Chromosome"/>
</dbReference>
<dbReference type="GO" id="GO:0005829">
    <property type="term" value="C:cytosol"/>
    <property type="evidence" value="ECO:0007669"/>
    <property type="project" value="TreeGrafter"/>
</dbReference>
<dbReference type="GO" id="GO:0002161">
    <property type="term" value="F:aminoacyl-tRNA deacylase activity"/>
    <property type="evidence" value="ECO:0007669"/>
    <property type="project" value="InterPro"/>
</dbReference>
<dbReference type="GO" id="GO:0005524">
    <property type="term" value="F:ATP binding"/>
    <property type="evidence" value="ECO:0007669"/>
    <property type="project" value="UniProtKB-UniRule"/>
</dbReference>
<dbReference type="GO" id="GO:0004832">
    <property type="term" value="F:valine-tRNA ligase activity"/>
    <property type="evidence" value="ECO:0007669"/>
    <property type="project" value="UniProtKB-UniRule"/>
</dbReference>
<dbReference type="GO" id="GO:0006438">
    <property type="term" value="P:valyl-tRNA aminoacylation"/>
    <property type="evidence" value="ECO:0007669"/>
    <property type="project" value="UniProtKB-UniRule"/>
</dbReference>
<dbReference type="CDD" id="cd07962">
    <property type="entry name" value="Anticodon_Ia_Val"/>
    <property type="match status" value="1"/>
</dbReference>
<dbReference type="CDD" id="cd00817">
    <property type="entry name" value="ValRS_core"/>
    <property type="match status" value="1"/>
</dbReference>
<dbReference type="FunFam" id="1.10.287.380:FF:000001">
    <property type="entry name" value="Valine--tRNA ligase"/>
    <property type="match status" value="1"/>
</dbReference>
<dbReference type="FunFam" id="1.10.730.10:FF:000014">
    <property type="entry name" value="Valine--tRNA ligase"/>
    <property type="match status" value="1"/>
</dbReference>
<dbReference type="FunFam" id="3.40.50.620:FF:000032">
    <property type="entry name" value="Valine--tRNA ligase"/>
    <property type="match status" value="1"/>
</dbReference>
<dbReference type="FunFam" id="3.40.50.620:FF:000098">
    <property type="entry name" value="Valine--tRNA ligase"/>
    <property type="match status" value="1"/>
</dbReference>
<dbReference type="FunFam" id="3.90.740.10:FF:000005">
    <property type="entry name" value="Valine--tRNA ligase, mitochondrial"/>
    <property type="match status" value="1"/>
</dbReference>
<dbReference type="Gene3D" id="3.40.50.620">
    <property type="entry name" value="HUPs"/>
    <property type="match status" value="2"/>
</dbReference>
<dbReference type="Gene3D" id="1.10.730.10">
    <property type="entry name" value="Isoleucyl-tRNA Synthetase, Domain 1"/>
    <property type="match status" value="1"/>
</dbReference>
<dbReference type="Gene3D" id="1.10.287.380">
    <property type="entry name" value="Valyl-tRNA synthetase, C-terminal domain"/>
    <property type="match status" value="1"/>
</dbReference>
<dbReference type="HAMAP" id="MF_02004">
    <property type="entry name" value="Val_tRNA_synth_type1"/>
    <property type="match status" value="1"/>
</dbReference>
<dbReference type="InterPro" id="IPR001412">
    <property type="entry name" value="aa-tRNA-synth_I_CS"/>
</dbReference>
<dbReference type="InterPro" id="IPR002300">
    <property type="entry name" value="aa-tRNA-synth_Ia"/>
</dbReference>
<dbReference type="InterPro" id="IPR033705">
    <property type="entry name" value="Anticodon_Ia_Val"/>
</dbReference>
<dbReference type="InterPro" id="IPR013155">
    <property type="entry name" value="M/V/L/I-tRNA-synth_anticd-bd"/>
</dbReference>
<dbReference type="InterPro" id="IPR014729">
    <property type="entry name" value="Rossmann-like_a/b/a_fold"/>
</dbReference>
<dbReference type="InterPro" id="IPR010978">
    <property type="entry name" value="tRNA-bd_arm"/>
</dbReference>
<dbReference type="InterPro" id="IPR009080">
    <property type="entry name" value="tRNAsynth_Ia_anticodon-bd"/>
</dbReference>
<dbReference type="InterPro" id="IPR037118">
    <property type="entry name" value="Val-tRNA_synth_C_sf"/>
</dbReference>
<dbReference type="InterPro" id="IPR019499">
    <property type="entry name" value="Val-tRNA_synth_tRNA-bd"/>
</dbReference>
<dbReference type="InterPro" id="IPR009008">
    <property type="entry name" value="Val/Leu/Ile-tRNA-synth_edit"/>
</dbReference>
<dbReference type="InterPro" id="IPR002303">
    <property type="entry name" value="Valyl-tRNA_ligase"/>
</dbReference>
<dbReference type="NCBIfam" id="NF004349">
    <property type="entry name" value="PRK05729.1"/>
    <property type="match status" value="1"/>
</dbReference>
<dbReference type="NCBIfam" id="TIGR00422">
    <property type="entry name" value="valS"/>
    <property type="match status" value="1"/>
</dbReference>
<dbReference type="PANTHER" id="PTHR11946:SF93">
    <property type="entry name" value="VALINE--TRNA LIGASE, CHLOROPLASTIC_MITOCHONDRIAL 2"/>
    <property type="match status" value="1"/>
</dbReference>
<dbReference type="PANTHER" id="PTHR11946">
    <property type="entry name" value="VALYL-TRNA SYNTHETASES"/>
    <property type="match status" value="1"/>
</dbReference>
<dbReference type="Pfam" id="PF08264">
    <property type="entry name" value="Anticodon_1"/>
    <property type="match status" value="1"/>
</dbReference>
<dbReference type="Pfam" id="PF00133">
    <property type="entry name" value="tRNA-synt_1"/>
    <property type="match status" value="1"/>
</dbReference>
<dbReference type="Pfam" id="PF10458">
    <property type="entry name" value="Val_tRNA-synt_C"/>
    <property type="match status" value="1"/>
</dbReference>
<dbReference type="PRINTS" id="PR00986">
    <property type="entry name" value="TRNASYNTHVAL"/>
</dbReference>
<dbReference type="SUPFAM" id="SSF47323">
    <property type="entry name" value="Anticodon-binding domain of a subclass of class I aminoacyl-tRNA synthetases"/>
    <property type="match status" value="1"/>
</dbReference>
<dbReference type="SUPFAM" id="SSF52374">
    <property type="entry name" value="Nucleotidylyl transferase"/>
    <property type="match status" value="1"/>
</dbReference>
<dbReference type="SUPFAM" id="SSF46589">
    <property type="entry name" value="tRNA-binding arm"/>
    <property type="match status" value="1"/>
</dbReference>
<dbReference type="SUPFAM" id="SSF50677">
    <property type="entry name" value="ValRS/IleRS/LeuRS editing domain"/>
    <property type="match status" value="1"/>
</dbReference>
<dbReference type="PROSITE" id="PS00178">
    <property type="entry name" value="AA_TRNA_LIGASE_I"/>
    <property type="match status" value="1"/>
</dbReference>
<evidence type="ECO:0000255" key="1">
    <source>
        <dbReference type="HAMAP-Rule" id="MF_02004"/>
    </source>
</evidence>
<gene>
    <name evidence="1" type="primary">valS</name>
    <name type="ordered locus">Pmob_1457</name>
</gene>
<name>SYV_PETMO</name>
<comment type="function">
    <text evidence="1">Catalyzes the attachment of valine to tRNA(Val). As ValRS can inadvertently accommodate and process structurally similar amino acids such as threonine, to avoid such errors, it has a 'posttransfer' editing activity that hydrolyzes mischarged Thr-tRNA(Val) in a tRNA-dependent manner.</text>
</comment>
<comment type="catalytic activity">
    <reaction evidence="1">
        <text>tRNA(Val) + L-valine + ATP = L-valyl-tRNA(Val) + AMP + diphosphate</text>
        <dbReference type="Rhea" id="RHEA:10704"/>
        <dbReference type="Rhea" id="RHEA-COMP:9672"/>
        <dbReference type="Rhea" id="RHEA-COMP:9708"/>
        <dbReference type="ChEBI" id="CHEBI:30616"/>
        <dbReference type="ChEBI" id="CHEBI:33019"/>
        <dbReference type="ChEBI" id="CHEBI:57762"/>
        <dbReference type="ChEBI" id="CHEBI:78442"/>
        <dbReference type="ChEBI" id="CHEBI:78537"/>
        <dbReference type="ChEBI" id="CHEBI:456215"/>
        <dbReference type="EC" id="6.1.1.9"/>
    </reaction>
</comment>
<comment type="subunit">
    <text evidence="1">Monomer.</text>
</comment>
<comment type="subcellular location">
    <subcellularLocation>
        <location evidence="1">Cytoplasm</location>
    </subcellularLocation>
</comment>
<comment type="domain">
    <text evidence="1">ValRS has two distinct active sites: one for aminoacylation and one for editing. The misactivated threonine is translocated from the active site to the editing site.</text>
</comment>
<comment type="domain">
    <text evidence="1">The C-terminal coiled-coil domain is crucial for aminoacylation activity.</text>
</comment>
<comment type="similarity">
    <text evidence="1">Belongs to the class-I aminoacyl-tRNA synthetase family. ValS type 1 subfamily.</text>
</comment>
<reference key="1">
    <citation type="submission" date="2007-11" db="EMBL/GenBank/DDBJ databases">
        <title>Complete sequence of Petroga mobilis SJ95.</title>
        <authorList>
            <consortium name="US DOE Joint Genome Institute"/>
            <person name="Copeland A."/>
            <person name="Lucas S."/>
            <person name="Lapidus A."/>
            <person name="Barry K."/>
            <person name="Glavina del Rio T."/>
            <person name="Dalin E."/>
            <person name="Tice H."/>
            <person name="Pitluck S."/>
            <person name="Meincke L."/>
            <person name="Brettin T."/>
            <person name="Bruce D."/>
            <person name="Detter J.C."/>
            <person name="Han C."/>
            <person name="Kuske C.R."/>
            <person name="Schmutz J."/>
            <person name="Larimer F."/>
            <person name="Land M."/>
            <person name="Hauser L."/>
            <person name="Kyrpides N."/>
            <person name="Mikhailova N."/>
            <person name="Noll K."/>
            <person name="Richardson P."/>
        </authorList>
    </citation>
    <scope>NUCLEOTIDE SEQUENCE [LARGE SCALE GENOMIC DNA]</scope>
    <source>
        <strain>DSM 10674 / SJ95</strain>
    </source>
</reference>
<sequence>MDIGKRYMPHELENKWYKLWEENHSFEPKPGNGKFSIVIPPPNITGRIHIGHALNIVLQDISVRYNRMKGKETVWIPGEDHAGIATQHVVEKYLLKEEGKRREDYTREEFLKITWDWANKYRNHIREQIKALAASVDWSRERFTLDEGLNQAVRKVFVSLYNEGLIYKGKYIVNWCPSCGTVLADDEVEHSEEKGKLWYIKYPLENTQNYVTVATTRPETMLGDTALAVNPSDERYKNLIGETAILPIVGRKLKIIADPYVDTNFGTGVVKVTPAHDPNDYQIGLRHDLERIQIIDENARINENGGKYAGLDRYIARERIVEDLKKEGLLEKEEDYTHSVGHCYRCDTVIEPLLLDQWFVKMKPLAEKAIQVVENDEIKFYPERWKKVYLNWMYEIRDWCISRQLWWGHRIPVWYCQNCGHVNVSVEDVKKCEKCGSTDLKQDEDVLDTWFSSALWPFSTLGWPEETEDLKKYYPTDLLVTGFDIIFFWVARMIMMGEKFMGEKPFHDVYLHQLVRDKYGRKMSKSLGNGVDPLEVINEYGTDPVRFTLSVLAAQGRDIKLDVGSFDAYRKFANKIWNAARFVLLNMEDYEKTVLKDEDLKIEDKWILTRLNSTILEISKDLEVYNYDQAARKLYDFFWNELCDWYIEASKNRLNSIGKDKLVVQNVILQVFDSSLRLLHPFMPYISEELWQKLPIEKDSELLISAKWPEYNESNIYPEAEKVFSKVMELVSGIRNVKAEMDIPQTQEVDVKYKIVAKNDDFIEKNKNLIEHLAFLINITQTEVKPAKSATAYVDESVEVYIPLGDYIDIDTEKQRLTKKLEKLSKDIELYNKKLSNKNFVEKADPDVVEKTKEDLIESEKKYQKLQALLKEIS</sequence>
<proteinExistence type="inferred from homology"/>
<feature type="chain" id="PRO_1000088564" description="Valine--tRNA ligase">
    <location>
        <begin position="1"/>
        <end position="874"/>
    </location>
</feature>
<feature type="coiled-coil region" evidence="1">
    <location>
        <begin position="806"/>
        <end position="874"/>
    </location>
</feature>
<feature type="short sequence motif" description="'HIGH' region">
    <location>
        <begin position="42"/>
        <end position="52"/>
    </location>
</feature>
<feature type="short sequence motif" description="'KMSKS' region">
    <location>
        <begin position="522"/>
        <end position="526"/>
    </location>
</feature>
<feature type="binding site" evidence="1">
    <location>
        <position position="525"/>
    </location>
    <ligand>
        <name>ATP</name>
        <dbReference type="ChEBI" id="CHEBI:30616"/>
    </ligand>
</feature>
<keyword id="KW-0030">Aminoacyl-tRNA synthetase</keyword>
<keyword id="KW-0067">ATP-binding</keyword>
<keyword id="KW-0175">Coiled coil</keyword>
<keyword id="KW-0963">Cytoplasm</keyword>
<keyword id="KW-0436">Ligase</keyword>
<keyword id="KW-0547">Nucleotide-binding</keyword>
<keyword id="KW-0648">Protein biosynthesis</keyword>
<organism>
    <name type="scientific">Petrotoga mobilis (strain DSM 10674 / SJ95)</name>
    <dbReference type="NCBI Taxonomy" id="403833"/>
    <lineage>
        <taxon>Bacteria</taxon>
        <taxon>Thermotogati</taxon>
        <taxon>Thermotogota</taxon>
        <taxon>Thermotogae</taxon>
        <taxon>Petrotogales</taxon>
        <taxon>Petrotogaceae</taxon>
        <taxon>Petrotoga</taxon>
    </lineage>
</organism>
<accession>A9BIJ7</accession>
<protein>
    <recommendedName>
        <fullName evidence="1">Valine--tRNA ligase</fullName>
        <ecNumber evidence="1">6.1.1.9</ecNumber>
    </recommendedName>
    <alternativeName>
        <fullName evidence="1">Valyl-tRNA synthetase</fullName>
        <shortName evidence="1">ValRS</shortName>
    </alternativeName>
</protein>